<proteinExistence type="inferred from homology"/>
<protein>
    <recommendedName>
        <fullName evidence="1">UPF0102 protein Shewmr4_3685</fullName>
    </recommendedName>
</protein>
<dbReference type="EMBL" id="CP000446">
    <property type="protein sequence ID" value="ABI40748.1"/>
    <property type="molecule type" value="Genomic_DNA"/>
</dbReference>
<dbReference type="RefSeq" id="WP_011624408.1">
    <property type="nucleotide sequence ID" value="NC_008321.1"/>
</dbReference>
<dbReference type="SMR" id="Q0HDW9"/>
<dbReference type="KEGG" id="she:Shewmr4_3685"/>
<dbReference type="HOGENOM" id="CLU_115353_1_0_6"/>
<dbReference type="GO" id="GO:0003676">
    <property type="term" value="F:nucleic acid binding"/>
    <property type="evidence" value="ECO:0007669"/>
    <property type="project" value="InterPro"/>
</dbReference>
<dbReference type="CDD" id="cd20736">
    <property type="entry name" value="PoNe_Nuclease"/>
    <property type="match status" value="1"/>
</dbReference>
<dbReference type="Gene3D" id="3.40.1350.10">
    <property type="match status" value="1"/>
</dbReference>
<dbReference type="HAMAP" id="MF_00048">
    <property type="entry name" value="UPF0102"/>
    <property type="match status" value="1"/>
</dbReference>
<dbReference type="InterPro" id="IPR011335">
    <property type="entry name" value="Restrct_endonuc-II-like"/>
</dbReference>
<dbReference type="InterPro" id="IPR011856">
    <property type="entry name" value="tRNA_endonuc-like_dom_sf"/>
</dbReference>
<dbReference type="InterPro" id="IPR003509">
    <property type="entry name" value="UPF0102_YraN-like"/>
</dbReference>
<dbReference type="NCBIfam" id="NF009150">
    <property type="entry name" value="PRK12497.1-3"/>
    <property type="match status" value="1"/>
</dbReference>
<dbReference type="NCBIfam" id="TIGR00252">
    <property type="entry name" value="YraN family protein"/>
    <property type="match status" value="1"/>
</dbReference>
<dbReference type="PANTHER" id="PTHR34039">
    <property type="entry name" value="UPF0102 PROTEIN YRAN"/>
    <property type="match status" value="1"/>
</dbReference>
<dbReference type="PANTHER" id="PTHR34039:SF1">
    <property type="entry name" value="UPF0102 PROTEIN YRAN"/>
    <property type="match status" value="1"/>
</dbReference>
<dbReference type="Pfam" id="PF02021">
    <property type="entry name" value="UPF0102"/>
    <property type="match status" value="1"/>
</dbReference>
<dbReference type="SUPFAM" id="SSF52980">
    <property type="entry name" value="Restriction endonuclease-like"/>
    <property type="match status" value="1"/>
</dbReference>
<evidence type="ECO:0000255" key="1">
    <source>
        <dbReference type="HAMAP-Rule" id="MF_00048"/>
    </source>
</evidence>
<reference key="1">
    <citation type="submission" date="2006-08" db="EMBL/GenBank/DDBJ databases">
        <title>Complete sequence of Shewanella sp. MR-4.</title>
        <authorList>
            <consortium name="US DOE Joint Genome Institute"/>
            <person name="Copeland A."/>
            <person name="Lucas S."/>
            <person name="Lapidus A."/>
            <person name="Barry K."/>
            <person name="Detter J.C."/>
            <person name="Glavina del Rio T."/>
            <person name="Hammon N."/>
            <person name="Israni S."/>
            <person name="Dalin E."/>
            <person name="Tice H."/>
            <person name="Pitluck S."/>
            <person name="Kiss H."/>
            <person name="Brettin T."/>
            <person name="Bruce D."/>
            <person name="Han C."/>
            <person name="Tapia R."/>
            <person name="Gilna P."/>
            <person name="Schmutz J."/>
            <person name="Larimer F."/>
            <person name="Land M."/>
            <person name="Hauser L."/>
            <person name="Kyrpides N."/>
            <person name="Mikhailova N."/>
            <person name="Nealson K."/>
            <person name="Konstantinidis K."/>
            <person name="Klappenbach J."/>
            <person name="Tiedje J."/>
            <person name="Richardson P."/>
        </authorList>
    </citation>
    <scope>NUCLEOTIDE SEQUENCE [LARGE SCALE GENOMIC DNA]</scope>
    <source>
        <strain>MR-4</strain>
    </source>
</reference>
<comment type="similarity">
    <text evidence="1">Belongs to the UPF0102 family.</text>
</comment>
<feature type="chain" id="PRO_1000009262" description="UPF0102 protein Shewmr4_3685">
    <location>
        <begin position="1"/>
        <end position="108"/>
    </location>
</feature>
<sequence>MTLGQQAESLAQGYLEQQGLTFVERNVRYPFGEIDLIMRHKHHWVFVEVKYRSANQFGGAIQALSKAQIGRIRMAASHYLQTHKLDVPCRFDVVAIEDAQIHWLVDAF</sequence>
<organism>
    <name type="scientific">Shewanella sp. (strain MR-4)</name>
    <dbReference type="NCBI Taxonomy" id="60480"/>
    <lineage>
        <taxon>Bacteria</taxon>
        <taxon>Pseudomonadati</taxon>
        <taxon>Pseudomonadota</taxon>
        <taxon>Gammaproteobacteria</taxon>
        <taxon>Alteromonadales</taxon>
        <taxon>Shewanellaceae</taxon>
        <taxon>Shewanella</taxon>
    </lineage>
</organism>
<gene>
    <name type="ordered locus">Shewmr4_3685</name>
</gene>
<name>Y3685_SHESM</name>
<accession>Q0HDW9</accession>